<dbReference type="EC" id="1.1.1.267" evidence="1"/>
<dbReference type="EMBL" id="CP000633">
    <property type="protein sequence ID" value="ACM37952.1"/>
    <property type="molecule type" value="Genomic_DNA"/>
</dbReference>
<dbReference type="RefSeq" id="WP_015917363.1">
    <property type="nucleotide sequence ID" value="NC_011989.1"/>
</dbReference>
<dbReference type="SMR" id="B9JTP4"/>
<dbReference type="STRING" id="311402.Avi_4083"/>
<dbReference type="KEGG" id="avi:Avi_4083"/>
<dbReference type="eggNOG" id="COG0743">
    <property type="taxonomic scope" value="Bacteria"/>
</dbReference>
<dbReference type="HOGENOM" id="CLU_035714_0_1_5"/>
<dbReference type="UniPathway" id="UPA00056">
    <property type="reaction ID" value="UER00092"/>
</dbReference>
<dbReference type="Proteomes" id="UP000001596">
    <property type="component" value="Chromosome 1"/>
</dbReference>
<dbReference type="GO" id="GO:0030604">
    <property type="term" value="F:1-deoxy-D-xylulose-5-phosphate reductoisomerase activity"/>
    <property type="evidence" value="ECO:0007669"/>
    <property type="project" value="UniProtKB-UniRule"/>
</dbReference>
<dbReference type="GO" id="GO:0030145">
    <property type="term" value="F:manganese ion binding"/>
    <property type="evidence" value="ECO:0007669"/>
    <property type="project" value="TreeGrafter"/>
</dbReference>
<dbReference type="GO" id="GO:0070402">
    <property type="term" value="F:NADPH binding"/>
    <property type="evidence" value="ECO:0007669"/>
    <property type="project" value="InterPro"/>
</dbReference>
<dbReference type="GO" id="GO:0051484">
    <property type="term" value="P:isopentenyl diphosphate biosynthetic process, methylerythritol 4-phosphate pathway involved in terpenoid biosynthetic process"/>
    <property type="evidence" value="ECO:0007669"/>
    <property type="project" value="TreeGrafter"/>
</dbReference>
<dbReference type="FunFam" id="3.40.50.720:FF:000045">
    <property type="entry name" value="1-deoxy-D-xylulose 5-phosphate reductoisomerase"/>
    <property type="match status" value="1"/>
</dbReference>
<dbReference type="Gene3D" id="1.10.1740.10">
    <property type="match status" value="1"/>
</dbReference>
<dbReference type="Gene3D" id="3.40.50.720">
    <property type="entry name" value="NAD(P)-binding Rossmann-like Domain"/>
    <property type="match status" value="1"/>
</dbReference>
<dbReference type="HAMAP" id="MF_00183">
    <property type="entry name" value="DXP_reductoisom"/>
    <property type="match status" value="1"/>
</dbReference>
<dbReference type="InterPro" id="IPR003821">
    <property type="entry name" value="DXP_reductoisomerase"/>
</dbReference>
<dbReference type="InterPro" id="IPR013644">
    <property type="entry name" value="DXP_reductoisomerase_C"/>
</dbReference>
<dbReference type="InterPro" id="IPR013512">
    <property type="entry name" value="DXP_reductoisomerase_N"/>
</dbReference>
<dbReference type="InterPro" id="IPR026877">
    <property type="entry name" value="DXPR_C"/>
</dbReference>
<dbReference type="InterPro" id="IPR036169">
    <property type="entry name" value="DXPR_C_sf"/>
</dbReference>
<dbReference type="InterPro" id="IPR036291">
    <property type="entry name" value="NAD(P)-bd_dom_sf"/>
</dbReference>
<dbReference type="NCBIfam" id="TIGR00243">
    <property type="entry name" value="Dxr"/>
    <property type="match status" value="1"/>
</dbReference>
<dbReference type="PANTHER" id="PTHR30525">
    <property type="entry name" value="1-DEOXY-D-XYLULOSE 5-PHOSPHATE REDUCTOISOMERASE"/>
    <property type="match status" value="1"/>
</dbReference>
<dbReference type="PANTHER" id="PTHR30525:SF0">
    <property type="entry name" value="1-DEOXY-D-XYLULOSE 5-PHOSPHATE REDUCTOISOMERASE, CHLOROPLASTIC"/>
    <property type="match status" value="1"/>
</dbReference>
<dbReference type="Pfam" id="PF08436">
    <property type="entry name" value="DXP_redisom_C"/>
    <property type="match status" value="1"/>
</dbReference>
<dbReference type="Pfam" id="PF02670">
    <property type="entry name" value="DXP_reductoisom"/>
    <property type="match status" value="1"/>
</dbReference>
<dbReference type="Pfam" id="PF13288">
    <property type="entry name" value="DXPR_C"/>
    <property type="match status" value="1"/>
</dbReference>
<dbReference type="PIRSF" id="PIRSF006205">
    <property type="entry name" value="Dxp_reductismrs"/>
    <property type="match status" value="1"/>
</dbReference>
<dbReference type="SUPFAM" id="SSF69055">
    <property type="entry name" value="1-deoxy-D-xylulose-5-phosphate reductoisomerase, C-terminal domain"/>
    <property type="match status" value="1"/>
</dbReference>
<dbReference type="SUPFAM" id="SSF55347">
    <property type="entry name" value="Glyceraldehyde-3-phosphate dehydrogenase-like, C-terminal domain"/>
    <property type="match status" value="1"/>
</dbReference>
<dbReference type="SUPFAM" id="SSF51735">
    <property type="entry name" value="NAD(P)-binding Rossmann-fold domains"/>
    <property type="match status" value="1"/>
</dbReference>
<accession>B9JTP4</accession>
<keyword id="KW-0414">Isoprene biosynthesis</keyword>
<keyword id="KW-0464">Manganese</keyword>
<keyword id="KW-0479">Metal-binding</keyword>
<keyword id="KW-0521">NADP</keyword>
<keyword id="KW-0560">Oxidoreductase</keyword>
<keyword id="KW-1185">Reference proteome</keyword>
<name>DXR_ALLAM</name>
<comment type="function">
    <text evidence="1">Catalyzes the NADPH-dependent rearrangement and reduction of 1-deoxy-D-xylulose-5-phosphate (DXP) to 2-C-methyl-D-erythritol 4-phosphate (MEP).</text>
</comment>
<comment type="catalytic activity">
    <reaction evidence="1">
        <text>2-C-methyl-D-erythritol 4-phosphate + NADP(+) = 1-deoxy-D-xylulose 5-phosphate + NADPH + H(+)</text>
        <dbReference type="Rhea" id="RHEA:13717"/>
        <dbReference type="ChEBI" id="CHEBI:15378"/>
        <dbReference type="ChEBI" id="CHEBI:57783"/>
        <dbReference type="ChEBI" id="CHEBI:57792"/>
        <dbReference type="ChEBI" id="CHEBI:58262"/>
        <dbReference type="ChEBI" id="CHEBI:58349"/>
        <dbReference type="EC" id="1.1.1.267"/>
    </reaction>
    <physiologicalReaction direction="right-to-left" evidence="1">
        <dbReference type="Rhea" id="RHEA:13719"/>
    </physiologicalReaction>
</comment>
<comment type="cofactor">
    <cofactor evidence="1">
        <name>Mg(2+)</name>
        <dbReference type="ChEBI" id="CHEBI:18420"/>
    </cofactor>
    <cofactor evidence="1">
        <name>Mn(2+)</name>
        <dbReference type="ChEBI" id="CHEBI:29035"/>
    </cofactor>
</comment>
<comment type="pathway">
    <text evidence="1">Isoprenoid biosynthesis; isopentenyl diphosphate biosynthesis via DXP pathway; isopentenyl diphosphate from 1-deoxy-D-xylulose 5-phosphate: step 1/6.</text>
</comment>
<comment type="similarity">
    <text evidence="1">Belongs to the DXR family.</text>
</comment>
<feature type="chain" id="PRO_1000189851" description="1-deoxy-D-xylulose 5-phosphate reductoisomerase">
    <location>
        <begin position="1"/>
        <end position="397"/>
    </location>
</feature>
<feature type="binding site" evidence="1">
    <location>
        <position position="17"/>
    </location>
    <ligand>
        <name>NADPH</name>
        <dbReference type="ChEBI" id="CHEBI:57783"/>
    </ligand>
</feature>
<feature type="binding site" evidence="1">
    <location>
        <position position="18"/>
    </location>
    <ligand>
        <name>NADPH</name>
        <dbReference type="ChEBI" id="CHEBI:57783"/>
    </ligand>
</feature>
<feature type="binding site" evidence="1">
    <location>
        <position position="19"/>
    </location>
    <ligand>
        <name>NADPH</name>
        <dbReference type="ChEBI" id="CHEBI:57783"/>
    </ligand>
</feature>
<feature type="binding site" evidence="1">
    <location>
        <position position="20"/>
    </location>
    <ligand>
        <name>NADPH</name>
        <dbReference type="ChEBI" id="CHEBI:57783"/>
    </ligand>
</feature>
<feature type="binding site" evidence="1">
    <location>
        <position position="47"/>
    </location>
    <ligand>
        <name>NADPH</name>
        <dbReference type="ChEBI" id="CHEBI:57783"/>
    </ligand>
</feature>
<feature type="binding site" evidence="1">
    <location>
        <position position="130"/>
    </location>
    <ligand>
        <name>NADPH</name>
        <dbReference type="ChEBI" id="CHEBI:57783"/>
    </ligand>
</feature>
<feature type="binding site" evidence="1">
    <location>
        <position position="131"/>
    </location>
    <ligand>
        <name>1-deoxy-D-xylulose 5-phosphate</name>
        <dbReference type="ChEBI" id="CHEBI:57792"/>
    </ligand>
</feature>
<feature type="binding site" evidence="1">
    <location>
        <position position="132"/>
    </location>
    <ligand>
        <name>NADPH</name>
        <dbReference type="ChEBI" id="CHEBI:57783"/>
    </ligand>
</feature>
<feature type="binding site" evidence="1">
    <location>
        <position position="156"/>
    </location>
    <ligand>
        <name>Mn(2+)</name>
        <dbReference type="ChEBI" id="CHEBI:29035"/>
    </ligand>
</feature>
<feature type="binding site" evidence="1">
    <location>
        <position position="157"/>
    </location>
    <ligand>
        <name>1-deoxy-D-xylulose 5-phosphate</name>
        <dbReference type="ChEBI" id="CHEBI:57792"/>
    </ligand>
</feature>
<feature type="binding site" evidence="1">
    <location>
        <position position="158"/>
    </location>
    <ligand>
        <name>1-deoxy-D-xylulose 5-phosphate</name>
        <dbReference type="ChEBI" id="CHEBI:57792"/>
    </ligand>
</feature>
<feature type="binding site" evidence="1">
    <location>
        <position position="158"/>
    </location>
    <ligand>
        <name>Mn(2+)</name>
        <dbReference type="ChEBI" id="CHEBI:29035"/>
    </ligand>
</feature>
<feature type="binding site" evidence="1">
    <location>
        <position position="182"/>
    </location>
    <ligand>
        <name>1-deoxy-D-xylulose 5-phosphate</name>
        <dbReference type="ChEBI" id="CHEBI:57792"/>
    </ligand>
</feature>
<feature type="binding site" evidence="1">
    <location>
        <position position="205"/>
    </location>
    <ligand>
        <name>1-deoxy-D-xylulose 5-phosphate</name>
        <dbReference type="ChEBI" id="CHEBI:57792"/>
    </ligand>
</feature>
<feature type="binding site" evidence="1">
    <location>
        <position position="211"/>
    </location>
    <ligand>
        <name>NADPH</name>
        <dbReference type="ChEBI" id="CHEBI:57783"/>
    </ligand>
</feature>
<feature type="binding site" evidence="1">
    <location>
        <position position="218"/>
    </location>
    <ligand>
        <name>1-deoxy-D-xylulose 5-phosphate</name>
        <dbReference type="ChEBI" id="CHEBI:57792"/>
    </ligand>
</feature>
<feature type="binding site" evidence="1">
    <location>
        <position position="223"/>
    </location>
    <ligand>
        <name>1-deoxy-D-xylulose 5-phosphate</name>
        <dbReference type="ChEBI" id="CHEBI:57792"/>
    </ligand>
</feature>
<feature type="binding site" evidence="1">
    <location>
        <position position="224"/>
    </location>
    <ligand>
        <name>1-deoxy-D-xylulose 5-phosphate</name>
        <dbReference type="ChEBI" id="CHEBI:57792"/>
    </ligand>
</feature>
<feature type="binding site" evidence="1">
    <location>
        <position position="227"/>
    </location>
    <ligand>
        <name>1-deoxy-D-xylulose 5-phosphate</name>
        <dbReference type="ChEBI" id="CHEBI:57792"/>
    </ligand>
</feature>
<feature type="binding site" evidence="1">
    <location>
        <position position="227"/>
    </location>
    <ligand>
        <name>Mn(2+)</name>
        <dbReference type="ChEBI" id="CHEBI:29035"/>
    </ligand>
</feature>
<proteinExistence type="inferred from homology"/>
<protein>
    <recommendedName>
        <fullName evidence="1">1-deoxy-D-xylulose 5-phosphate reductoisomerase</fullName>
        <shortName evidence="1">DXP reductoisomerase</shortName>
        <ecNumber evidence="1">1.1.1.267</ecNumber>
    </recommendedName>
    <alternativeName>
        <fullName evidence="1">1-deoxyxylulose-5-phosphate reductoisomerase</fullName>
    </alternativeName>
    <alternativeName>
        <fullName evidence="1">2-C-methyl-D-erythritol 4-phosphate synthase</fullName>
    </alternativeName>
</protein>
<reference key="1">
    <citation type="journal article" date="2009" name="J. Bacteriol.">
        <title>Genome sequences of three Agrobacterium biovars help elucidate the evolution of multichromosome genomes in bacteria.</title>
        <authorList>
            <person name="Slater S.C."/>
            <person name="Goldman B.S."/>
            <person name="Goodner B."/>
            <person name="Setubal J.C."/>
            <person name="Farrand S.K."/>
            <person name="Nester E.W."/>
            <person name="Burr T.J."/>
            <person name="Banta L."/>
            <person name="Dickerman A.W."/>
            <person name="Paulsen I."/>
            <person name="Otten L."/>
            <person name="Suen G."/>
            <person name="Welch R."/>
            <person name="Almeida N.F."/>
            <person name="Arnold F."/>
            <person name="Burton O.T."/>
            <person name="Du Z."/>
            <person name="Ewing A."/>
            <person name="Godsy E."/>
            <person name="Heisel S."/>
            <person name="Houmiel K.L."/>
            <person name="Jhaveri J."/>
            <person name="Lu J."/>
            <person name="Miller N.M."/>
            <person name="Norton S."/>
            <person name="Chen Q."/>
            <person name="Phoolcharoen W."/>
            <person name="Ohlin V."/>
            <person name="Ondrusek D."/>
            <person name="Pride N."/>
            <person name="Stricklin S.L."/>
            <person name="Sun J."/>
            <person name="Wheeler C."/>
            <person name="Wilson L."/>
            <person name="Zhu H."/>
            <person name="Wood D.W."/>
        </authorList>
    </citation>
    <scope>NUCLEOTIDE SEQUENCE [LARGE SCALE GENOMIC DNA]</scope>
    <source>
        <strain>ATCC BAA-846 / DSM 112012 / S4</strain>
    </source>
</reference>
<organism>
    <name type="scientific">Allorhizobium ampelinum (strain ATCC BAA-846 / DSM 112012 / S4)</name>
    <name type="common">Agrobacterium vitis (strain S4)</name>
    <dbReference type="NCBI Taxonomy" id="311402"/>
    <lineage>
        <taxon>Bacteria</taxon>
        <taxon>Pseudomonadati</taxon>
        <taxon>Pseudomonadota</taxon>
        <taxon>Alphaproteobacteria</taxon>
        <taxon>Hyphomicrobiales</taxon>
        <taxon>Rhizobiaceae</taxon>
        <taxon>Rhizobium/Agrobacterium group</taxon>
        <taxon>Allorhizobium</taxon>
        <taxon>Allorhizobium ampelinum</taxon>
    </lineage>
</organism>
<evidence type="ECO:0000255" key="1">
    <source>
        <dbReference type="HAMAP-Rule" id="MF_00183"/>
    </source>
</evidence>
<gene>
    <name evidence="1" type="primary">dxr</name>
    <name type="ordered locus">Avi_4083</name>
</gene>
<sequence length="397" mass="42386">MNTATSQPRRLTILGSTGSIGTNTLDVIRQMGGRDRFDIMALTGHGNVALLAEQALVTGARLAVTSDENQYIALKDLLSGSGIDVAAGSSGLQEAACLEADWVMAAIVGTAGLQPTLTAAARGADIALANKECLVSAGELFIETVRKGGGKIIPVDSEHSAIFQCLDENHRDTLERIVLTASGGPFRTFTRQQMADVSVQTARAHPNWSMGLKVSIGSASMFNKALEMIEAKHLFDLTPDQIEVIVHPQSIIHSMVGYSDGSVLAQLGVPDMRTAIGYALSYPKRAALDVDRLDFTKLARLDFEAPDLDRFPAIRLARTALERGGLQGAVLNAAEECAFEAFVEEKIGFLAMADVVEDVMDHLSGLAPATVIADVFAADAQARRRAQEVILNQGRTR</sequence>